<evidence type="ECO:0000255" key="1"/>
<evidence type="ECO:0000256" key="2">
    <source>
        <dbReference type="SAM" id="MobiDB-lite"/>
    </source>
</evidence>
<evidence type="ECO:0000269" key="3">
    <source>
    </source>
</evidence>
<evidence type="ECO:0000269" key="4">
    <source>
    </source>
</evidence>
<evidence type="ECO:0000269" key="5">
    <source>
    </source>
</evidence>
<evidence type="ECO:0000269" key="6">
    <source>
    </source>
</evidence>
<evidence type="ECO:0000269" key="7">
    <source>
    </source>
</evidence>
<evidence type="ECO:0000303" key="8">
    <source>
    </source>
</evidence>
<evidence type="ECO:0000303" key="9">
    <source>
    </source>
</evidence>
<evidence type="ECO:0000312" key="10">
    <source>
        <dbReference type="Araport" id="AT3G07780"/>
    </source>
</evidence>
<evidence type="ECO:0000312" key="11">
    <source>
        <dbReference type="EMBL" id="AAF13095.1"/>
    </source>
</evidence>
<evidence type="ECO:0000312" key="12">
    <source>
        <dbReference type="EMBL" id="AAF21188.1"/>
    </source>
</evidence>
<dbReference type="EMBL" id="DQ059085">
    <property type="protein sequence ID" value="AAY57579.1"/>
    <property type="molecule type" value="mRNA"/>
</dbReference>
<dbReference type="EMBL" id="AC009176">
    <property type="protein sequence ID" value="AAF13095.1"/>
    <property type="molecule type" value="Genomic_DNA"/>
</dbReference>
<dbReference type="EMBL" id="AC013483">
    <property type="protein sequence ID" value="AAF21188.1"/>
    <property type="molecule type" value="Genomic_DNA"/>
</dbReference>
<dbReference type="EMBL" id="CP002686">
    <property type="protein sequence ID" value="AEE74603.1"/>
    <property type="molecule type" value="Genomic_DNA"/>
</dbReference>
<dbReference type="EMBL" id="CP002686">
    <property type="protein sequence ID" value="ANM64894.1"/>
    <property type="molecule type" value="Genomic_DNA"/>
</dbReference>
<dbReference type="EMBL" id="AY045899">
    <property type="protein sequence ID" value="AAK76573.1"/>
    <property type="molecule type" value="mRNA"/>
</dbReference>
<dbReference type="EMBL" id="AY113947">
    <property type="protein sequence ID" value="AAM44995.1"/>
    <property type="molecule type" value="mRNA"/>
</dbReference>
<dbReference type="RefSeq" id="NP_001326896.1">
    <property type="nucleotide sequence ID" value="NM_001337745.1"/>
</dbReference>
<dbReference type="RefSeq" id="NP_566320.1">
    <property type="nucleotide sequence ID" value="NM_111657.4"/>
</dbReference>
<dbReference type="SMR" id="Q9S736"/>
<dbReference type="BioGRID" id="5304">
    <property type="interactions" value="32"/>
</dbReference>
<dbReference type="FunCoup" id="Q9S736">
    <property type="interactions" value="1182"/>
</dbReference>
<dbReference type="IntAct" id="Q9S736">
    <property type="interactions" value="27"/>
</dbReference>
<dbReference type="STRING" id="3702.Q9S736"/>
<dbReference type="iPTMnet" id="Q9S736"/>
<dbReference type="PaxDb" id="3702-AT3G07780.1"/>
<dbReference type="ProteomicsDB" id="250852"/>
<dbReference type="EnsemblPlants" id="AT3G07780.1">
    <property type="protein sequence ID" value="AT3G07780.1"/>
    <property type="gene ID" value="AT3G07780"/>
</dbReference>
<dbReference type="EnsemblPlants" id="AT3G07780.3">
    <property type="protein sequence ID" value="AT3G07780.3"/>
    <property type="gene ID" value="AT3G07780"/>
</dbReference>
<dbReference type="GeneID" id="819969"/>
<dbReference type="Gramene" id="AT3G07780.1">
    <property type="protein sequence ID" value="AT3G07780.1"/>
    <property type="gene ID" value="AT3G07780"/>
</dbReference>
<dbReference type="Gramene" id="AT3G07780.3">
    <property type="protein sequence ID" value="AT3G07780.3"/>
    <property type="gene ID" value="AT3G07780"/>
</dbReference>
<dbReference type="KEGG" id="ath:AT3G07780"/>
<dbReference type="Araport" id="AT3G07780"/>
<dbReference type="TAIR" id="AT3G07780">
    <property type="gene designation" value="OBE1"/>
</dbReference>
<dbReference type="eggNOG" id="ENOG502QSQF">
    <property type="taxonomic scope" value="Eukaryota"/>
</dbReference>
<dbReference type="HOGENOM" id="CLU_006737_2_0_1"/>
<dbReference type="InParanoid" id="Q9S736"/>
<dbReference type="PhylomeDB" id="Q9S736"/>
<dbReference type="PRO" id="PR:Q9S736"/>
<dbReference type="Proteomes" id="UP000006548">
    <property type="component" value="Chromosome 3"/>
</dbReference>
<dbReference type="ExpressionAtlas" id="Q9S736">
    <property type="expression patterns" value="baseline and differential"/>
</dbReference>
<dbReference type="GO" id="GO:0000792">
    <property type="term" value="C:heterochromatin"/>
    <property type="evidence" value="ECO:0000314"/>
    <property type="project" value="UniProtKB"/>
</dbReference>
<dbReference type="GO" id="GO:0005654">
    <property type="term" value="C:nucleoplasm"/>
    <property type="evidence" value="ECO:0000314"/>
    <property type="project" value="UniProtKB"/>
</dbReference>
<dbReference type="GO" id="GO:0005634">
    <property type="term" value="C:nucleus"/>
    <property type="evidence" value="ECO:0000314"/>
    <property type="project" value="TAIR"/>
</dbReference>
<dbReference type="GO" id="GO:0009536">
    <property type="term" value="C:plastid"/>
    <property type="evidence" value="ECO:0007005"/>
    <property type="project" value="TAIR"/>
</dbReference>
<dbReference type="GO" id="GO:0042802">
    <property type="term" value="F:identical protein binding"/>
    <property type="evidence" value="ECO:0000353"/>
    <property type="project" value="UniProtKB"/>
</dbReference>
<dbReference type="GO" id="GO:0046982">
    <property type="term" value="F:protein heterodimerization activity"/>
    <property type="evidence" value="ECO:0000304"/>
    <property type="project" value="UniProtKB"/>
</dbReference>
<dbReference type="GO" id="GO:0042803">
    <property type="term" value="F:protein homodimerization activity"/>
    <property type="evidence" value="ECO:0000304"/>
    <property type="project" value="UniProtKB"/>
</dbReference>
<dbReference type="GO" id="GO:0008270">
    <property type="term" value="F:zinc ion binding"/>
    <property type="evidence" value="ECO:0007669"/>
    <property type="project" value="UniProtKB-KW"/>
</dbReference>
<dbReference type="GO" id="GO:0009793">
    <property type="term" value="P:embryo development ending in seed dormancy"/>
    <property type="evidence" value="ECO:0000316"/>
    <property type="project" value="TAIR"/>
</dbReference>
<dbReference type="GO" id="GO:0010078">
    <property type="term" value="P:maintenance of root meristem identity"/>
    <property type="evidence" value="ECO:0000316"/>
    <property type="project" value="TAIR"/>
</dbReference>
<dbReference type="GO" id="GO:0010492">
    <property type="term" value="P:maintenance of shoot apical meristem identity"/>
    <property type="evidence" value="ECO:0000316"/>
    <property type="project" value="TAIR"/>
</dbReference>
<dbReference type="GO" id="GO:0080022">
    <property type="term" value="P:primary root development"/>
    <property type="evidence" value="ECO:0000316"/>
    <property type="project" value="TAIR"/>
</dbReference>
<dbReference type="GO" id="GO:0031347">
    <property type="term" value="P:regulation of defense response"/>
    <property type="evidence" value="ECO:0000315"/>
    <property type="project" value="TAIR"/>
</dbReference>
<dbReference type="GO" id="GO:0010468">
    <property type="term" value="P:regulation of gene expression"/>
    <property type="evidence" value="ECO:0000316"/>
    <property type="project" value="TAIR"/>
</dbReference>
<dbReference type="GO" id="GO:0010071">
    <property type="term" value="P:root meristem specification"/>
    <property type="evidence" value="ECO:0000316"/>
    <property type="project" value="TAIR"/>
</dbReference>
<dbReference type="GO" id="GO:0046740">
    <property type="term" value="P:transport of virus in host, cell to cell"/>
    <property type="evidence" value="ECO:0000315"/>
    <property type="project" value="UniProtKB"/>
</dbReference>
<dbReference type="CDD" id="cd15612">
    <property type="entry name" value="PHD_OBE1_like"/>
    <property type="match status" value="1"/>
</dbReference>
<dbReference type="InterPro" id="IPR047578">
    <property type="entry name" value="OBE1-like_PHD"/>
</dbReference>
<dbReference type="InterPro" id="IPR004082">
    <property type="entry name" value="OBERON"/>
</dbReference>
<dbReference type="InterPro" id="IPR032881">
    <property type="entry name" value="Oberon-like_PHD"/>
</dbReference>
<dbReference type="InterPro" id="IPR032535">
    <property type="entry name" value="Oberon_cc"/>
</dbReference>
<dbReference type="InterPro" id="IPR001965">
    <property type="entry name" value="Znf_PHD"/>
</dbReference>
<dbReference type="PANTHER" id="PTHR21736:SF39">
    <property type="entry name" value="PROTEIN OBERON 1"/>
    <property type="match status" value="1"/>
</dbReference>
<dbReference type="PANTHER" id="PTHR21736">
    <property type="entry name" value="VERNALIZATION-INSENSITIVE PROTEIN 3"/>
    <property type="match status" value="1"/>
</dbReference>
<dbReference type="Pfam" id="PF16312">
    <property type="entry name" value="Oberon_cc"/>
    <property type="match status" value="1"/>
</dbReference>
<dbReference type="Pfam" id="PF07227">
    <property type="entry name" value="PHD_Oberon"/>
    <property type="match status" value="1"/>
</dbReference>
<dbReference type="PIRSF" id="PIRSF025218">
    <property type="entry name" value="DUF1423_pln"/>
    <property type="match status" value="1"/>
</dbReference>
<dbReference type="PRINTS" id="PR01544">
    <property type="entry name" value="ARATH130DUF"/>
</dbReference>
<dbReference type="SMART" id="SM00249">
    <property type="entry name" value="PHD"/>
    <property type="match status" value="1"/>
</dbReference>
<dbReference type="PROSITE" id="PS01359">
    <property type="entry name" value="ZF_PHD_1"/>
    <property type="match status" value="1"/>
</dbReference>
<proteinExistence type="evidence at protein level"/>
<comment type="function">
    <text evidence="4 5">Probable transcription factor that acts together with OBE2 for the maintenance and/or establishment of both the shoot and root meristems, probably by controlling the expression of the meristem genes such as WUS, PLT1 and PLT2 and of genes required for auxin responses. Promotes cell meristematic activity via the WUSCHEL-CLAVATA pathway. Involved in the development of the basal pole and in auxin-mediated root and vascular development in the embryo. Confers sensitivity to turnip mosaic virus (TuMV) probably by promoting viral movement and multiplication via interaction with TuMV VPg.</text>
</comment>
<comment type="subunit">
    <text evidence="3 4 5 6 7">Self-interacts (PubMed:18403411, PubMed:19392692, PubMed:22378640). Interacts with OBE2, OBE3 and OBE4 (PubMed:19392692, PubMed:22378640). Binds to VPg of pea seed borne mosaic virus (PSbMV), turnip mosaic virus (TuMV) and lettuce mosaic virus (LMV), but not with VPg of tobacco etch virus (TEV), cowpea mosaic virus (CPMV), tomato black ring virus (TBRV) and grapevine fan leaf virus (GFLV) (PubMed:14963126). Interacts with RBL (PubMed:30338215).</text>
</comment>
<comment type="subcellular location">
    <subcellularLocation>
        <location evidence="4">Nucleus</location>
    </subcellularLocation>
    <subcellularLocation>
        <location evidence="7">Nucleus</location>
        <location evidence="7">Nucleoplasm</location>
    </subcellularLocation>
    <text evidence="7">Colocalizes with heterochromatin.</text>
</comment>
<comment type="tissue specificity">
    <text evidence="4 5">Expressed in roots, seedlings, stems, leaves, flowers and siliques, especially in the vasculature.</text>
</comment>
<comment type="developmental stage">
    <text evidence="4 5">First observed in the embryo proper at the four-cell stage. Later expressed throughout the embryo from the eight-cell to the bent-cotyledon stages. Until the torpedo stage of development, mostly concentrated at the root pole. At the torpedo stage, strongest levels in the columella and lateral root cap. Hardly detected in the suspensor. Present in seedling roots. In mature and fully differentiated young roots, accumulates from the root cap to the emerging root hair zone.</text>
</comment>
<comment type="induction">
    <text evidence="5">By auxin in the root elongation zone.</text>
</comment>
<comment type="disruption phenotype">
    <text evidence="4 5">No visible phenotype. When associated with OBE2 disruption, plants exhibit premature termination of the shoot meristem and impaired root apical meristem establishment, leading to a diminutive phenotype characterized by an absence of roots and defective development of the vasculature.</text>
</comment>
<accession>Q9S736</accession>
<name>OBE1_ARATH</name>
<gene>
    <name evidence="9" type="primary">OBE1</name>
    <name evidence="8" type="synonym">PVIP2</name>
    <name evidence="10" type="ordered locus">At3g07780</name>
    <name evidence="12" type="ORF">F17A17.12</name>
    <name evidence="11" type="ORF">MLP3.23</name>
</gene>
<protein>
    <recommendedName>
        <fullName evidence="9">Protein OBERON 1</fullName>
    </recommendedName>
    <alternativeName>
        <fullName evidence="8">Potyvirus VPg-interacting protein 2</fullName>
    </alternativeName>
</protein>
<keyword id="KW-0175">Coiled coil</keyword>
<keyword id="KW-0217">Developmental protein</keyword>
<keyword id="KW-0945">Host-virus interaction</keyword>
<keyword id="KW-0479">Metal-binding</keyword>
<keyword id="KW-0539">Nucleus</keyword>
<keyword id="KW-1185">Reference proteome</keyword>
<keyword id="KW-0804">Transcription</keyword>
<keyword id="KW-0805">Transcription regulation</keyword>
<keyword id="KW-0862">Zinc</keyword>
<keyword id="KW-0863">Zinc-finger</keyword>
<reference key="1">
    <citation type="submission" date="2005-05" db="EMBL/GenBank/DDBJ databases">
        <title>Functional Analysis of the Arabidopsis PHD family of proteins.</title>
        <authorList>
            <person name="Callis J."/>
            <person name="Stone S.L."/>
            <person name="Troy A."/>
        </authorList>
    </citation>
    <scope>NUCLEOTIDE SEQUENCE [MRNA]</scope>
    <source>
        <strain>cv. Columbia</strain>
    </source>
</reference>
<reference key="2">
    <citation type="journal article" date="2000" name="Nature">
        <title>Sequence and analysis of chromosome 3 of the plant Arabidopsis thaliana.</title>
        <authorList>
            <person name="Salanoubat M."/>
            <person name="Lemcke K."/>
            <person name="Rieger M."/>
            <person name="Ansorge W."/>
            <person name="Unseld M."/>
            <person name="Fartmann B."/>
            <person name="Valle G."/>
            <person name="Bloecker H."/>
            <person name="Perez-Alonso M."/>
            <person name="Obermaier B."/>
            <person name="Delseny M."/>
            <person name="Boutry M."/>
            <person name="Grivell L.A."/>
            <person name="Mache R."/>
            <person name="Puigdomenech P."/>
            <person name="De Simone V."/>
            <person name="Choisne N."/>
            <person name="Artiguenave F."/>
            <person name="Robert C."/>
            <person name="Brottier P."/>
            <person name="Wincker P."/>
            <person name="Cattolico L."/>
            <person name="Weissenbach J."/>
            <person name="Saurin W."/>
            <person name="Quetier F."/>
            <person name="Schaefer M."/>
            <person name="Mueller-Auer S."/>
            <person name="Gabel C."/>
            <person name="Fuchs M."/>
            <person name="Benes V."/>
            <person name="Wurmbach E."/>
            <person name="Drzonek H."/>
            <person name="Erfle H."/>
            <person name="Jordan N."/>
            <person name="Bangert S."/>
            <person name="Wiedelmann R."/>
            <person name="Kranz H."/>
            <person name="Voss H."/>
            <person name="Holland R."/>
            <person name="Brandt P."/>
            <person name="Nyakatura G."/>
            <person name="Vezzi A."/>
            <person name="D'Angelo M."/>
            <person name="Pallavicini A."/>
            <person name="Toppo S."/>
            <person name="Simionati B."/>
            <person name="Conrad A."/>
            <person name="Hornischer K."/>
            <person name="Kauer G."/>
            <person name="Loehnert T.-H."/>
            <person name="Nordsiek G."/>
            <person name="Reichelt J."/>
            <person name="Scharfe M."/>
            <person name="Schoen O."/>
            <person name="Bargues M."/>
            <person name="Terol J."/>
            <person name="Climent J."/>
            <person name="Navarro P."/>
            <person name="Collado C."/>
            <person name="Perez-Perez A."/>
            <person name="Ottenwaelder B."/>
            <person name="Duchemin D."/>
            <person name="Cooke R."/>
            <person name="Laudie M."/>
            <person name="Berger-Llauro C."/>
            <person name="Purnelle B."/>
            <person name="Masuy D."/>
            <person name="de Haan M."/>
            <person name="Maarse A.C."/>
            <person name="Alcaraz J.-P."/>
            <person name="Cottet A."/>
            <person name="Casacuberta E."/>
            <person name="Monfort A."/>
            <person name="Argiriou A."/>
            <person name="Flores M."/>
            <person name="Liguori R."/>
            <person name="Vitale D."/>
            <person name="Mannhaupt G."/>
            <person name="Haase D."/>
            <person name="Schoof H."/>
            <person name="Rudd S."/>
            <person name="Zaccaria P."/>
            <person name="Mewes H.-W."/>
            <person name="Mayer K.F.X."/>
            <person name="Kaul S."/>
            <person name="Town C.D."/>
            <person name="Koo H.L."/>
            <person name="Tallon L.J."/>
            <person name="Jenkins J."/>
            <person name="Rooney T."/>
            <person name="Rizzo M."/>
            <person name="Walts A."/>
            <person name="Utterback T."/>
            <person name="Fujii C.Y."/>
            <person name="Shea T.P."/>
            <person name="Creasy T.H."/>
            <person name="Haas B."/>
            <person name="Maiti R."/>
            <person name="Wu D."/>
            <person name="Peterson J."/>
            <person name="Van Aken S."/>
            <person name="Pai G."/>
            <person name="Militscher J."/>
            <person name="Sellers P."/>
            <person name="Gill J.E."/>
            <person name="Feldblyum T.V."/>
            <person name="Preuss D."/>
            <person name="Lin X."/>
            <person name="Nierman W.C."/>
            <person name="Salzberg S.L."/>
            <person name="White O."/>
            <person name="Venter J.C."/>
            <person name="Fraser C.M."/>
            <person name="Kaneko T."/>
            <person name="Nakamura Y."/>
            <person name="Sato S."/>
            <person name="Kato T."/>
            <person name="Asamizu E."/>
            <person name="Sasamoto S."/>
            <person name="Kimura T."/>
            <person name="Idesawa K."/>
            <person name="Kawashima K."/>
            <person name="Kishida Y."/>
            <person name="Kiyokawa C."/>
            <person name="Kohara M."/>
            <person name="Matsumoto M."/>
            <person name="Matsuno A."/>
            <person name="Muraki A."/>
            <person name="Nakayama S."/>
            <person name="Nakazaki N."/>
            <person name="Shinpo S."/>
            <person name="Takeuchi C."/>
            <person name="Wada T."/>
            <person name="Watanabe A."/>
            <person name="Yamada M."/>
            <person name="Yasuda M."/>
            <person name="Tabata S."/>
        </authorList>
    </citation>
    <scope>NUCLEOTIDE SEQUENCE [LARGE SCALE GENOMIC DNA]</scope>
    <source>
        <strain>cv. Columbia</strain>
    </source>
</reference>
<reference key="3">
    <citation type="journal article" date="2017" name="Plant J.">
        <title>Araport11: a complete reannotation of the Arabidopsis thaliana reference genome.</title>
        <authorList>
            <person name="Cheng C.Y."/>
            <person name="Krishnakumar V."/>
            <person name="Chan A.P."/>
            <person name="Thibaud-Nissen F."/>
            <person name="Schobel S."/>
            <person name="Town C.D."/>
        </authorList>
    </citation>
    <scope>GENOME REANNOTATION</scope>
    <source>
        <strain>cv. Columbia</strain>
    </source>
</reference>
<reference key="4">
    <citation type="journal article" date="2003" name="Science">
        <title>Empirical analysis of transcriptional activity in the Arabidopsis genome.</title>
        <authorList>
            <person name="Yamada K."/>
            <person name="Lim J."/>
            <person name="Dale J.M."/>
            <person name="Chen H."/>
            <person name="Shinn P."/>
            <person name="Palm C.J."/>
            <person name="Southwick A.M."/>
            <person name="Wu H.C."/>
            <person name="Kim C.J."/>
            <person name="Nguyen M."/>
            <person name="Pham P.K."/>
            <person name="Cheuk R.F."/>
            <person name="Karlin-Newmann G."/>
            <person name="Liu S.X."/>
            <person name="Lam B."/>
            <person name="Sakano H."/>
            <person name="Wu T."/>
            <person name="Yu G."/>
            <person name="Miranda M."/>
            <person name="Quach H.L."/>
            <person name="Tripp M."/>
            <person name="Chang C.H."/>
            <person name="Lee J.M."/>
            <person name="Toriumi M.J."/>
            <person name="Chan M.M."/>
            <person name="Tang C.C."/>
            <person name="Onodera C.S."/>
            <person name="Deng J.M."/>
            <person name="Akiyama K."/>
            <person name="Ansari Y."/>
            <person name="Arakawa T."/>
            <person name="Banh J."/>
            <person name="Banno F."/>
            <person name="Bowser L."/>
            <person name="Brooks S.Y."/>
            <person name="Carninci P."/>
            <person name="Chao Q."/>
            <person name="Choy N."/>
            <person name="Enju A."/>
            <person name="Goldsmith A.D."/>
            <person name="Gurjal M."/>
            <person name="Hansen N.F."/>
            <person name="Hayashizaki Y."/>
            <person name="Johnson-Hopson C."/>
            <person name="Hsuan V.W."/>
            <person name="Iida K."/>
            <person name="Karnes M."/>
            <person name="Khan S."/>
            <person name="Koesema E."/>
            <person name="Ishida J."/>
            <person name="Jiang P.X."/>
            <person name="Jones T."/>
            <person name="Kawai J."/>
            <person name="Kamiya A."/>
            <person name="Meyers C."/>
            <person name="Nakajima M."/>
            <person name="Narusaka M."/>
            <person name="Seki M."/>
            <person name="Sakurai T."/>
            <person name="Satou M."/>
            <person name="Tamse R."/>
            <person name="Vaysberg M."/>
            <person name="Wallender E.K."/>
            <person name="Wong C."/>
            <person name="Yamamura Y."/>
            <person name="Yuan S."/>
            <person name="Shinozaki K."/>
            <person name="Davis R.W."/>
            <person name="Theologis A."/>
            <person name="Ecker J.R."/>
        </authorList>
    </citation>
    <scope>NUCLEOTIDE SEQUENCE [LARGE SCALE MRNA]</scope>
    <source>
        <strain>cv. Columbia</strain>
        <tissue>Leaf</tissue>
    </source>
</reference>
<reference key="5">
    <citation type="journal article" date="2004" name="J. Virol.">
        <title>A cysteine-rich plant protein potentiates Potyvirus movement through an interaction with the virus genome-linked protein VPg.</title>
        <authorList>
            <person name="Dunoyer P."/>
            <person name="Thomas C."/>
            <person name="Harrison S."/>
            <person name="Revers F."/>
            <person name="Maule A."/>
        </authorList>
    </citation>
    <scope>INTERACTION WITH POTYVIRUS VPG PROTEIN</scope>
</reference>
<reference key="6">
    <citation type="journal article" date="2008" name="Development">
        <title>The Arabidopsis OBERON1 and OBERON2 genes encode plant homeodomain finger proteins and are required for apical meristem maintenance.</title>
        <authorList>
            <person name="Saiga S."/>
            <person name="Furumizu C."/>
            <person name="Yokoyama R."/>
            <person name="Kurata T."/>
            <person name="Sato S."/>
            <person name="Kato T."/>
            <person name="Tabata S."/>
            <person name="Suzuki M."/>
            <person name="Komeda Y."/>
        </authorList>
    </citation>
    <scope>FUNCTION</scope>
    <scope>DISRUPTION PHENOTYPE</scope>
    <scope>SUBCELLULAR LOCATION</scope>
    <scope>TISSUE SPECIFICITY</scope>
    <scope>DEVELOPMENTAL STAGE</scope>
    <scope>DIMERIZATION</scope>
</reference>
<reference key="7">
    <citation type="journal article" date="2009" name="Plant J.">
        <title>Arabidopsis plant homeodomain finger proteins operate downstream of auxin accumulation in specifying the vasculature and primary root meristem.</title>
        <authorList>
            <person name="Thomas C.L."/>
            <person name="Schmidt D."/>
            <person name="Bayer E.M."/>
            <person name="Dreos R."/>
            <person name="Maule A.J."/>
        </authorList>
    </citation>
    <scope>FUNCTION</scope>
    <scope>DISRUPTION PHENOTYPE</scope>
    <scope>TISSUE SPECIFICITY</scope>
    <scope>DEVELOPMENTAL STAGE</scope>
    <scope>INDUCTION BY AUXIN</scope>
    <scope>SUBUNIT</scope>
    <scope>INTERACTION WITH OBE2; OBE3 AND OBE4</scope>
</reference>
<reference key="8">
    <citation type="journal article" date="2012" name="Development">
        <title>Control of embryonic meristem initiation in Arabidopsis by PHD-finger protein complexes.</title>
        <authorList>
            <person name="Saiga S."/>
            <person name="Moeller B."/>
            <person name="Watanabe-Taneda A."/>
            <person name="Abe M."/>
            <person name="Weijers D."/>
            <person name="Komeda Y."/>
        </authorList>
    </citation>
    <scope>INTERACTION WITH OBE2; OBE3 AND OBE4</scope>
</reference>
<reference key="9">
    <citation type="journal article" date="2018" name="FEBS Open Bio">
        <title>REBELOTE, a regulator of floral determinacy in Arabidopsis thaliana, interacts with both nucleolar and nucleoplasmic proteins.</title>
        <authorList>
            <person name="de Bossoreille S."/>
            <person name="Morel P."/>
            <person name="Trehin C."/>
            <person name="Negrutiu I."/>
        </authorList>
    </citation>
    <scope>INTERACTION WITH RBL</scope>
    <scope>SUBCELLULAR LOCATION</scope>
</reference>
<sequence>MGTSSGSNLPHQMLPPRQQLQTSLSLVSSDPHLSRSNSGIVRESPAESASSQETWPTSKSIMGRKTDSGKTGPDSHDQHVIRHVSIADKVSLRDIARERLDIVAERMHRLPEEYLEELKNGLKAILEGNGAQPIDEFMFLQKFVQTRSDLTSKTLVRAHRVQLEVLVVINTGIQAFLHPNINLSQSSLIEIFVYKRCRNIACQNELPADGCPCEICANRKGFCNLCMCVICNKFDFAVNTCRWIGCDVCSHWTHTDCAIRDGEISMGVSPKSVSGMGEMLFKCRACNHTSELLGWVKDVFQHCAPNWDRESLMKELDFVSRIFRGSEDTRGRKLFWKCEELMEKIKGGLAEATAAKLILMFFQEIELDSPKSLESGEGGGTIAPQDACNRIAEVVKETLRKMEIVGEEKTRMYKKARMGLEECEREVEEKAKQVAELQMERQKKKQQIEEVERIVRLKQAEAEMFQLKANEAKVEAERLERIVKAKKEKTEEEYASNYLKLRLSEAEAEKEYLFEKIKEQESGGNGGEASQAVMYSKIREMLHGYNASSPRVDPRSNQRNPFRSNP</sequence>
<organism>
    <name type="scientific">Arabidopsis thaliana</name>
    <name type="common">Mouse-ear cress</name>
    <dbReference type="NCBI Taxonomy" id="3702"/>
    <lineage>
        <taxon>Eukaryota</taxon>
        <taxon>Viridiplantae</taxon>
        <taxon>Streptophyta</taxon>
        <taxon>Embryophyta</taxon>
        <taxon>Tracheophyta</taxon>
        <taxon>Spermatophyta</taxon>
        <taxon>Magnoliopsida</taxon>
        <taxon>eudicotyledons</taxon>
        <taxon>Gunneridae</taxon>
        <taxon>Pentapetalae</taxon>
        <taxon>rosids</taxon>
        <taxon>malvids</taxon>
        <taxon>Brassicales</taxon>
        <taxon>Brassicaceae</taxon>
        <taxon>Camelineae</taxon>
        <taxon>Arabidopsis</taxon>
    </lineage>
</organism>
<feature type="chain" id="PRO_0000399746" description="Protein OBERON 1">
    <location>
        <begin position="1"/>
        <end position="566"/>
    </location>
</feature>
<feature type="zinc finger region" description="PHD-type">
    <location>
        <begin position="225"/>
        <end position="289"/>
    </location>
</feature>
<feature type="region of interest" description="Disordered" evidence="2">
    <location>
        <begin position="1"/>
        <end position="79"/>
    </location>
</feature>
<feature type="region of interest" description="Disordered" evidence="2">
    <location>
        <begin position="545"/>
        <end position="566"/>
    </location>
</feature>
<feature type="coiled-coil region" evidence="1">
    <location>
        <begin position="407"/>
        <end position="522"/>
    </location>
</feature>
<feature type="compositionally biased region" description="Polar residues" evidence="2">
    <location>
        <begin position="1"/>
        <end position="10"/>
    </location>
</feature>
<feature type="compositionally biased region" description="Low complexity" evidence="2">
    <location>
        <begin position="18"/>
        <end position="29"/>
    </location>
</feature>
<feature type="compositionally biased region" description="Polar residues" evidence="2">
    <location>
        <begin position="47"/>
        <end position="60"/>
    </location>
</feature>
<feature type="compositionally biased region" description="Basic and acidic residues" evidence="2">
    <location>
        <begin position="64"/>
        <end position="79"/>
    </location>
</feature>
<feature type="compositionally biased region" description="Polar residues" evidence="2">
    <location>
        <begin position="555"/>
        <end position="566"/>
    </location>
</feature>